<gene>
    <name evidence="1" type="primary">panD</name>
    <name type="ordered locus">Ava_3547</name>
</gene>
<keyword id="KW-0068">Autocatalytic cleavage</keyword>
<keyword id="KW-0963">Cytoplasm</keyword>
<keyword id="KW-0210">Decarboxylase</keyword>
<keyword id="KW-0456">Lyase</keyword>
<keyword id="KW-0566">Pantothenate biosynthesis</keyword>
<keyword id="KW-0670">Pyruvate</keyword>
<keyword id="KW-0704">Schiff base</keyword>
<keyword id="KW-0865">Zymogen</keyword>
<reference key="1">
    <citation type="journal article" date="2014" name="Stand. Genomic Sci.">
        <title>Complete genome sequence of Anabaena variabilis ATCC 29413.</title>
        <authorList>
            <person name="Thiel T."/>
            <person name="Pratte B.S."/>
            <person name="Zhong J."/>
            <person name="Goodwin L."/>
            <person name="Copeland A."/>
            <person name="Lucas S."/>
            <person name="Han C."/>
            <person name="Pitluck S."/>
            <person name="Land M.L."/>
            <person name="Kyrpides N.C."/>
            <person name="Woyke T."/>
        </authorList>
    </citation>
    <scope>NUCLEOTIDE SEQUENCE [LARGE SCALE GENOMIC DNA]</scope>
    <source>
        <strain>ATCC 29413 / PCC 7937</strain>
    </source>
</reference>
<dbReference type="EC" id="4.1.1.11" evidence="1"/>
<dbReference type="EMBL" id="CP000117">
    <property type="protein sequence ID" value="ABA23154.1"/>
    <property type="molecule type" value="Genomic_DNA"/>
</dbReference>
<dbReference type="RefSeq" id="WP_010997719.1">
    <property type="nucleotide sequence ID" value="NC_007413.1"/>
</dbReference>
<dbReference type="SMR" id="Q3M782"/>
<dbReference type="STRING" id="240292.Ava_3547"/>
<dbReference type="GeneID" id="58726340"/>
<dbReference type="KEGG" id="ava:Ava_3547"/>
<dbReference type="eggNOG" id="COG0853">
    <property type="taxonomic scope" value="Bacteria"/>
</dbReference>
<dbReference type="HOGENOM" id="CLU_115305_2_0_3"/>
<dbReference type="UniPathway" id="UPA00028">
    <property type="reaction ID" value="UER00002"/>
</dbReference>
<dbReference type="Proteomes" id="UP000002533">
    <property type="component" value="Chromosome"/>
</dbReference>
<dbReference type="GO" id="GO:0005829">
    <property type="term" value="C:cytosol"/>
    <property type="evidence" value="ECO:0007669"/>
    <property type="project" value="TreeGrafter"/>
</dbReference>
<dbReference type="GO" id="GO:0004068">
    <property type="term" value="F:aspartate 1-decarboxylase activity"/>
    <property type="evidence" value="ECO:0007669"/>
    <property type="project" value="UniProtKB-UniRule"/>
</dbReference>
<dbReference type="GO" id="GO:0006523">
    <property type="term" value="P:alanine biosynthetic process"/>
    <property type="evidence" value="ECO:0007669"/>
    <property type="project" value="InterPro"/>
</dbReference>
<dbReference type="GO" id="GO:0015940">
    <property type="term" value="P:pantothenate biosynthetic process"/>
    <property type="evidence" value="ECO:0007669"/>
    <property type="project" value="UniProtKB-UniRule"/>
</dbReference>
<dbReference type="CDD" id="cd06919">
    <property type="entry name" value="Asp_decarbox"/>
    <property type="match status" value="1"/>
</dbReference>
<dbReference type="Gene3D" id="2.40.40.20">
    <property type="match status" value="1"/>
</dbReference>
<dbReference type="HAMAP" id="MF_00446">
    <property type="entry name" value="PanD"/>
    <property type="match status" value="1"/>
</dbReference>
<dbReference type="InterPro" id="IPR009010">
    <property type="entry name" value="Asp_de-COase-like_dom_sf"/>
</dbReference>
<dbReference type="InterPro" id="IPR003190">
    <property type="entry name" value="Asp_decarbox"/>
</dbReference>
<dbReference type="NCBIfam" id="TIGR00223">
    <property type="entry name" value="panD"/>
    <property type="match status" value="1"/>
</dbReference>
<dbReference type="PANTHER" id="PTHR21012">
    <property type="entry name" value="ASPARTATE 1-DECARBOXYLASE"/>
    <property type="match status" value="1"/>
</dbReference>
<dbReference type="PANTHER" id="PTHR21012:SF0">
    <property type="entry name" value="ASPARTATE 1-DECARBOXYLASE"/>
    <property type="match status" value="1"/>
</dbReference>
<dbReference type="Pfam" id="PF02261">
    <property type="entry name" value="Asp_decarbox"/>
    <property type="match status" value="1"/>
</dbReference>
<dbReference type="PIRSF" id="PIRSF006246">
    <property type="entry name" value="Asp_decarbox"/>
    <property type="match status" value="1"/>
</dbReference>
<dbReference type="SUPFAM" id="SSF50692">
    <property type="entry name" value="ADC-like"/>
    <property type="match status" value="1"/>
</dbReference>
<protein>
    <recommendedName>
        <fullName evidence="1">Aspartate 1-decarboxylase</fullName>
        <ecNumber evidence="1">4.1.1.11</ecNumber>
    </recommendedName>
    <alternativeName>
        <fullName evidence="1">Aspartate alpha-decarboxylase</fullName>
    </alternativeName>
    <component>
        <recommendedName>
            <fullName evidence="1">Aspartate 1-decarboxylase beta chain</fullName>
        </recommendedName>
    </component>
    <component>
        <recommendedName>
            <fullName evidence="1">Aspartate 1-decarboxylase alpha chain</fullName>
        </recommendedName>
    </component>
</protein>
<proteinExistence type="inferred from homology"/>
<organism>
    <name type="scientific">Trichormus variabilis (strain ATCC 29413 / PCC 7937)</name>
    <name type="common">Anabaena variabilis</name>
    <dbReference type="NCBI Taxonomy" id="240292"/>
    <lineage>
        <taxon>Bacteria</taxon>
        <taxon>Bacillati</taxon>
        <taxon>Cyanobacteriota</taxon>
        <taxon>Cyanophyceae</taxon>
        <taxon>Nostocales</taxon>
        <taxon>Nostocaceae</taxon>
        <taxon>Trichormus</taxon>
    </lineage>
</organism>
<sequence length="127" mass="14029">MQRTLLLAKIHNCTLTGANINYVGSISIDQILLDKSGILPYEQVQVVNNANGQRFITYAIPAPAHSGIIELNGAAARLGIIGDRVIIMTYGQFTSEELKSYTPTVVIVDEKNRPLEVRRYDDLLSQV</sequence>
<name>PAND_TRIV2</name>
<comment type="function">
    <text evidence="1">Catalyzes the pyruvoyl-dependent decarboxylation of aspartate to produce beta-alanine.</text>
</comment>
<comment type="catalytic activity">
    <reaction evidence="1">
        <text>L-aspartate + H(+) = beta-alanine + CO2</text>
        <dbReference type="Rhea" id="RHEA:19497"/>
        <dbReference type="ChEBI" id="CHEBI:15378"/>
        <dbReference type="ChEBI" id="CHEBI:16526"/>
        <dbReference type="ChEBI" id="CHEBI:29991"/>
        <dbReference type="ChEBI" id="CHEBI:57966"/>
        <dbReference type="EC" id="4.1.1.11"/>
    </reaction>
</comment>
<comment type="cofactor">
    <cofactor evidence="1">
        <name>pyruvate</name>
        <dbReference type="ChEBI" id="CHEBI:15361"/>
    </cofactor>
    <text evidence="1">Binds 1 pyruvoyl group covalently per subunit.</text>
</comment>
<comment type="pathway">
    <text evidence="1">Cofactor biosynthesis; (R)-pantothenate biosynthesis; beta-alanine from L-aspartate: step 1/1.</text>
</comment>
<comment type="subunit">
    <text evidence="1">Heterooctamer of four alpha and four beta subunits.</text>
</comment>
<comment type="subcellular location">
    <subcellularLocation>
        <location evidence="1">Cytoplasm</location>
    </subcellularLocation>
</comment>
<comment type="PTM">
    <text evidence="1">Is synthesized initially as an inactive proenzyme, which is activated by self-cleavage at a specific serine bond to produce a beta-subunit with a hydroxyl group at its C-terminus and an alpha-subunit with a pyruvoyl group at its N-terminus.</text>
</comment>
<comment type="similarity">
    <text evidence="1">Belongs to the PanD family.</text>
</comment>
<feature type="chain" id="PRO_0000236845" description="Aspartate 1-decarboxylase beta chain" evidence="1">
    <location>
        <begin position="1"/>
        <end position="24"/>
    </location>
</feature>
<feature type="chain" id="PRO_0000236846" description="Aspartate 1-decarboxylase alpha chain" evidence="1">
    <location>
        <begin position="25"/>
        <end position="127"/>
    </location>
</feature>
<feature type="active site" description="Schiff-base intermediate with substrate; via pyruvic acid" evidence="1">
    <location>
        <position position="25"/>
    </location>
</feature>
<feature type="active site" description="Proton donor" evidence="1">
    <location>
        <position position="58"/>
    </location>
</feature>
<feature type="binding site" evidence="1">
    <location>
        <position position="57"/>
    </location>
    <ligand>
        <name>substrate</name>
    </ligand>
</feature>
<feature type="binding site" evidence="1">
    <location>
        <begin position="73"/>
        <end position="75"/>
    </location>
    <ligand>
        <name>substrate</name>
    </ligand>
</feature>
<feature type="modified residue" description="Pyruvic acid (Ser)" evidence="1">
    <location>
        <position position="25"/>
    </location>
</feature>
<accession>Q3M782</accession>
<evidence type="ECO:0000255" key="1">
    <source>
        <dbReference type="HAMAP-Rule" id="MF_00446"/>
    </source>
</evidence>